<gene>
    <name evidence="7 8" type="primary">CEN1</name>
    <name evidence="11" type="ORF">TGME49_247230</name>
</gene>
<proteinExistence type="evidence at protein level"/>
<keyword id="KW-0106">Calcium</keyword>
<keyword id="KW-0963">Cytoplasm</keyword>
<keyword id="KW-0206">Cytoskeleton</keyword>
<keyword id="KW-0479">Metal-binding</keyword>
<keyword id="KW-1185">Reference proteome</keyword>
<keyword id="KW-0677">Repeat</keyword>
<name>CETN1_TOXGM</name>
<comment type="function">
    <text evidence="3 4">Acts as a calcium sensor (PubMed:32759683). Part of the centrosome outer core complex (PubMed:25734885).</text>
</comment>
<comment type="subunit">
    <text evidence="4 5 6">Monomer (PubMed:32759683, PubMed:34114596). Homooligomerizes in a Ca(2+)-dependent manner (PubMed:32759683, PubMed:34114596). Interaction via the C-terminus with other proteins disrupts and/or prevents homooligomerization (PubMed:34114596). Interacts with SFI1 (PubMed:36009009).</text>
</comment>
<comment type="subcellular location">
    <subcellularLocation>
        <location evidence="3">Cytoplasm</location>
        <location evidence="3">Cytoskeleton</location>
        <location evidence="3">Microtubule organizing center</location>
        <location evidence="3">Centrosome</location>
    </subcellularLocation>
    <text evidence="3">Localizes to centrosome outer core.</text>
</comment>
<comment type="domain">
    <text evidence="4 5">EF-hand 1 and EF-hand 2 domains bind Ca(2+); the binding induces a conformational change which facilitates the interaction with other proteins (PubMed:32759683, PubMed:34114596). EF-hand 3 and EF-hand 4 domains do not bind Ca(2+) (PubMed:32759683).</text>
</comment>
<comment type="domain">
    <text evidence="5">The C-terminus can bind to other proteins in a Ca(2+)-independent manner; the binding disrupts and/or prevents homooligomerization.</text>
</comment>
<comment type="similarity">
    <text evidence="9">Belongs to the centrin family.</text>
</comment>
<sequence>MHSRKGASSLPRGRGAGKKTELTEEQRQEIKEAFDLFDTDGSGCIDAKELKVAMRALGFEPKKEEIRKMIADVDKDGTGSVDFQEFLSLMTVKMAERDPREEILKAFRLFDDDETGKISFKNLKRVSKELGENLTDEELQEMIDEADRDGDGEINEEEFIRIMRKTNLF</sequence>
<protein>
    <recommendedName>
        <fullName evidence="7 8">Centrin-1</fullName>
        <shortName evidence="7 8">TgCEN1</shortName>
        <shortName evidence="8">TgCentrin1</shortName>
    </recommendedName>
</protein>
<dbReference type="EMBL" id="KE138840">
    <property type="protein sequence ID" value="EPT24911.1"/>
    <property type="molecule type" value="Genomic_DNA"/>
</dbReference>
<dbReference type="RefSeq" id="XP_002367090.1">
    <property type="nucleotide sequence ID" value="XM_002367049.2"/>
</dbReference>
<dbReference type="SMR" id="A0A125YHX7"/>
<dbReference type="EnsemblProtists" id="TGME49_247230-t26_1">
    <property type="protein sequence ID" value="TGME49_247230-t26_1"/>
    <property type="gene ID" value="TGME49_247230"/>
</dbReference>
<dbReference type="GeneID" id="7897983"/>
<dbReference type="KEGG" id="tgo:TGME49_247230"/>
<dbReference type="VEuPathDB" id="ToxoDB:TGME49_247230"/>
<dbReference type="OrthoDB" id="26525at2759"/>
<dbReference type="PhylomeDB" id="A0A125YHX7"/>
<dbReference type="Proteomes" id="UP000001529">
    <property type="component" value="Chromosome XII"/>
</dbReference>
<dbReference type="GO" id="GO:0016460">
    <property type="term" value="C:myosin II complex"/>
    <property type="evidence" value="ECO:0007669"/>
    <property type="project" value="TreeGrafter"/>
</dbReference>
<dbReference type="GO" id="GO:0005509">
    <property type="term" value="F:calcium ion binding"/>
    <property type="evidence" value="ECO:0000314"/>
    <property type="project" value="UniProtKB"/>
</dbReference>
<dbReference type="GO" id="GO:0016174">
    <property type="term" value="F:NAD(P)H oxidase H2O2-forming activity"/>
    <property type="evidence" value="ECO:0007669"/>
    <property type="project" value="UniProtKB-EC"/>
</dbReference>
<dbReference type="CDD" id="cd00051">
    <property type="entry name" value="EFh"/>
    <property type="match status" value="1"/>
</dbReference>
<dbReference type="FunFam" id="1.10.238.10:FF:000077">
    <property type="entry name" value="Centrin 1"/>
    <property type="match status" value="1"/>
</dbReference>
<dbReference type="FunFam" id="1.10.238.10:FF:000070">
    <property type="entry name" value="Centrin-1"/>
    <property type="match status" value="1"/>
</dbReference>
<dbReference type="Gene3D" id="1.10.238.10">
    <property type="entry name" value="EF-hand"/>
    <property type="match status" value="2"/>
</dbReference>
<dbReference type="InterPro" id="IPR050230">
    <property type="entry name" value="CALM/Myosin/TropC-like"/>
</dbReference>
<dbReference type="InterPro" id="IPR011992">
    <property type="entry name" value="EF-hand-dom_pair"/>
</dbReference>
<dbReference type="InterPro" id="IPR018247">
    <property type="entry name" value="EF_Hand_1_Ca_BS"/>
</dbReference>
<dbReference type="InterPro" id="IPR002048">
    <property type="entry name" value="EF_hand_dom"/>
</dbReference>
<dbReference type="InterPro" id="IPR000629">
    <property type="entry name" value="RNA-helicase_DEAD-box_CS"/>
</dbReference>
<dbReference type="PANTHER" id="PTHR23048:SF59">
    <property type="entry name" value="EF-HAND SUPERFAMILY PROTEIN"/>
    <property type="match status" value="1"/>
</dbReference>
<dbReference type="PANTHER" id="PTHR23048">
    <property type="entry name" value="MYOSIN LIGHT CHAIN 1, 3"/>
    <property type="match status" value="1"/>
</dbReference>
<dbReference type="Pfam" id="PF13499">
    <property type="entry name" value="EF-hand_7"/>
    <property type="match status" value="2"/>
</dbReference>
<dbReference type="SMART" id="SM00054">
    <property type="entry name" value="EFh"/>
    <property type="match status" value="4"/>
</dbReference>
<dbReference type="SUPFAM" id="SSF47473">
    <property type="entry name" value="EF-hand"/>
    <property type="match status" value="1"/>
</dbReference>
<dbReference type="PROSITE" id="PS00039">
    <property type="entry name" value="DEAD_ATP_HELICASE"/>
    <property type="match status" value="1"/>
</dbReference>
<dbReference type="PROSITE" id="PS00018">
    <property type="entry name" value="EF_HAND_1"/>
    <property type="match status" value="3"/>
</dbReference>
<dbReference type="PROSITE" id="PS50222">
    <property type="entry name" value="EF_HAND_2"/>
    <property type="match status" value="4"/>
</dbReference>
<organism evidence="12">
    <name type="scientific">Toxoplasma gondii (strain ATCC 50611 / Me49)</name>
    <dbReference type="NCBI Taxonomy" id="508771"/>
    <lineage>
        <taxon>Eukaryota</taxon>
        <taxon>Sar</taxon>
        <taxon>Alveolata</taxon>
        <taxon>Apicomplexa</taxon>
        <taxon>Conoidasida</taxon>
        <taxon>Coccidia</taxon>
        <taxon>Eucoccidiorida</taxon>
        <taxon>Eimeriorina</taxon>
        <taxon>Sarcocystidae</taxon>
        <taxon>Toxoplasma</taxon>
    </lineage>
</organism>
<accession>A0A125YHX7</accession>
<feature type="chain" id="PRO_0000458049" description="Centrin-1">
    <location>
        <begin position="1"/>
        <end position="169"/>
    </location>
</feature>
<feature type="domain" description="EF-hand 1" evidence="1">
    <location>
        <begin position="25"/>
        <end position="60"/>
    </location>
</feature>
<feature type="domain" description="EF-hand 2" evidence="1">
    <location>
        <begin position="61"/>
        <end position="96"/>
    </location>
</feature>
<feature type="domain" description="EF-hand 3" evidence="1">
    <location>
        <begin position="98"/>
        <end position="133"/>
    </location>
</feature>
<feature type="domain" description="EF-hand 4" evidence="1">
    <location>
        <begin position="134"/>
        <end position="169"/>
    </location>
</feature>
<feature type="region of interest" description="Disordered" evidence="2">
    <location>
        <begin position="1"/>
        <end position="25"/>
    </location>
</feature>
<feature type="region of interest" description="Essential for homooligomerization" evidence="5">
    <location>
        <begin position="1"/>
        <end position="21"/>
    </location>
</feature>
<feature type="binding site" evidence="1 10">
    <location>
        <position position="38"/>
    </location>
    <ligand>
        <name>Ca(2+)</name>
        <dbReference type="ChEBI" id="CHEBI:29108"/>
        <label>1</label>
        <note>high affinity</note>
    </ligand>
</feature>
<feature type="binding site" evidence="1 10">
    <location>
        <position position="40"/>
    </location>
    <ligand>
        <name>Ca(2+)</name>
        <dbReference type="ChEBI" id="CHEBI:29108"/>
        <label>1</label>
        <note>high affinity</note>
    </ligand>
</feature>
<feature type="binding site" evidence="1 10">
    <location>
        <position position="42"/>
    </location>
    <ligand>
        <name>Ca(2+)</name>
        <dbReference type="ChEBI" id="CHEBI:29108"/>
        <label>1</label>
        <note>high affinity</note>
    </ligand>
</feature>
<feature type="binding site" evidence="1 10">
    <location>
        <position position="44"/>
    </location>
    <ligand>
        <name>Ca(2+)</name>
        <dbReference type="ChEBI" id="CHEBI:29108"/>
        <label>1</label>
        <note>high affinity</note>
    </ligand>
</feature>
<feature type="binding site" evidence="1 10">
    <location>
        <position position="49"/>
    </location>
    <ligand>
        <name>Ca(2+)</name>
        <dbReference type="ChEBI" id="CHEBI:29108"/>
        <label>1</label>
        <note>high affinity</note>
    </ligand>
</feature>
<feature type="binding site" evidence="1 10">
    <location>
        <position position="74"/>
    </location>
    <ligand>
        <name>Ca(2+)</name>
        <dbReference type="ChEBI" id="CHEBI:29108"/>
        <label>2</label>
        <note>low affinity</note>
    </ligand>
</feature>
<feature type="binding site" evidence="1 10">
    <location>
        <position position="76"/>
    </location>
    <ligand>
        <name>Ca(2+)</name>
        <dbReference type="ChEBI" id="CHEBI:29108"/>
        <label>2</label>
        <note>low affinity</note>
    </ligand>
</feature>
<feature type="binding site" evidence="1 10">
    <location>
        <position position="78"/>
    </location>
    <ligand>
        <name>Ca(2+)</name>
        <dbReference type="ChEBI" id="CHEBI:29108"/>
        <label>2</label>
        <note>low affinity</note>
    </ligand>
</feature>
<feature type="binding site" evidence="1 10">
    <location>
        <position position="80"/>
    </location>
    <ligand>
        <name>Ca(2+)</name>
        <dbReference type="ChEBI" id="CHEBI:29108"/>
        <label>2</label>
        <note>low affinity</note>
    </ligand>
</feature>
<feature type="binding site" evidence="1 10">
    <location>
        <position position="85"/>
    </location>
    <ligand>
        <name>Ca(2+)</name>
        <dbReference type="ChEBI" id="CHEBI:29108"/>
        <label>2</label>
        <note>low affinity</note>
    </ligand>
</feature>
<feature type="mutagenesis site" description="Loss of homooligomerization in presence of Ca(2+). No effect on the binding to a synthetic peptide. Abolishes Ca(2+) binding to EF-hand 1 domain; when associated with A-43. Abolishes Ca(2+) binding to EF-hand 2 domain; when associated with A-79. No effect on Ca(2+) binding; when associated with A-152." evidence="4 5">
    <location>
        <begin position="2"/>
        <end position="21"/>
    </location>
</feature>
<feature type="mutagenesis site" description="Abolishes Ca(2+) binding to EF-hand 1 domain; when associated with 2-HIS--GLU-21 DEL." evidence="4">
    <original>G</original>
    <variation>A</variation>
    <location>
        <position position="43"/>
    </location>
</feature>
<feature type="mutagenesis site" description="Abolishes Ca(2+) binding to EF-hand 2 domain; when associated with 2-HIS--GLU-21 DEL." evidence="4">
    <original>G</original>
    <variation>A</variation>
    <location>
        <position position="79"/>
    </location>
</feature>
<feature type="mutagenesis site" description="No effect on Ca(2+) binding; when associated with 2-HIS--GLU-21 DEL." evidence="4">
    <original>G</original>
    <variation>A</variation>
    <location>
        <position position="152"/>
    </location>
</feature>
<evidence type="ECO:0000255" key="1">
    <source>
        <dbReference type="PROSITE-ProRule" id="PRU00448"/>
    </source>
</evidence>
<evidence type="ECO:0000256" key="2">
    <source>
        <dbReference type="SAM" id="MobiDB-lite"/>
    </source>
</evidence>
<evidence type="ECO:0000269" key="3">
    <source>
    </source>
</evidence>
<evidence type="ECO:0000269" key="4">
    <source>
    </source>
</evidence>
<evidence type="ECO:0000269" key="5">
    <source>
    </source>
</evidence>
<evidence type="ECO:0000269" key="6">
    <source>
    </source>
</evidence>
<evidence type="ECO:0000303" key="7">
    <source>
    </source>
</evidence>
<evidence type="ECO:0000303" key="8">
    <source>
    </source>
</evidence>
<evidence type="ECO:0000305" key="9"/>
<evidence type="ECO:0000305" key="10">
    <source>
    </source>
</evidence>
<evidence type="ECO:0000312" key="11">
    <source>
        <dbReference type="EMBL" id="EPT24911.1"/>
    </source>
</evidence>
<evidence type="ECO:0000312" key="12">
    <source>
        <dbReference type="Proteomes" id="UP000001529"/>
    </source>
</evidence>
<reference evidence="12" key="1">
    <citation type="submission" date="2013-04" db="EMBL/GenBank/DDBJ databases">
        <authorList>
            <person name="Sibley D."/>
            <person name="Venepally P."/>
            <person name="Karamycheva S."/>
            <person name="Hadjithomas M."/>
            <person name="Khan A."/>
            <person name="Brunk B."/>
            <person name="Roos D."/>
            <person name="Caler E."/>
            <person name="Lorenzi H."/>
        </authorList>
    </citation>
    <scope>NUCLEOTIDE SEQUENCE [LARGE SCALE GENOMIC DNA]</scope>
    <source>
        <strain evidence="12">ATCC 50611 / Me49</strain>
    </source>
</reference>
<reference key="2">
    <citation type="journal article" date="2015" name="PLoS Biol.">
        <title>A novel bipartite centrosome coordinates the apicomplexan cell cycle.</title>
        <authorList>
            <person name="Suvorova E.S."/>
            <person name="Francia M."/>
            <person name="Striepen B."/>
            <person name="White M.W."/>
        </authorList>
    </citation>
    <scope>FUNCTION</scope>
    <scope>SUBCELLULAR LOCATION</scope>
</reference>
<reference evidence="9" key="3">
    <citation type="journal article" date="2020" name="Biomolecules">
        <title>Distinct Calcium Binding and Structural Properties of Two Centrin Isoforms from Toxoplasma gondii.</title>
        <authorList>
            <person name="Bombardi L."/>
            <person name="Pedretti M."/>
            <person name="Conter C."/>
            <person name="Dominici P."/>
            <person name="Astegno A."/>
        </authorList>
    </citation>
    <scope>FUNCTION</scope>
    <scope>SUBUNIT</scope>
    <scope>DOMAIN</scope>
    <scope>MUTAGENESIS OF 2-HIS--GLU-21; GLY-43; GLY-79 AND GLY-152</scope>
</reference>
<reference evidence="9" key="4">
    <citation type="journal article" date="2021" name="Biochem. J.">
        <title>The interplay of self-assembly and target binding in centrin 1 from Toxoplasma gondii.</title>
        <authorList>
            <person name="Conter C."/>
            <person name="Bombardi L."/>
            <person name="Pedretti M."/>
            <person name="Favretto F."/>
            <person name="Di Matteo A."/>
            <person name="Dominici P."/>
            <person name="Astegno A."/>
        </authorList>
    </citation>
    <scope>SUBUNIT</scope>
    <scope>DOMAIN</scope>
    <scope>MUTAGENESIS OF 2-HIS--GLU-21</scope>
</reference>
<reference key="5">
    <citation type="journal article" date="2022" name="Biomolecules">
        <title>Conformational Plasticity of Centrin 1 from Toxoplasma gondii in Binding to the Centrosomal Protein SFI1.</title>
        <authorList>
            <person name="Bombardi L."/>
            <person name="Favretto F."/>
            <person name="Pedretti M."/>
            <person name="Conter C."/>
            <person name="Dominici P."/>
            <person name="Astegno A."/>
        </authorList>
    </citation>
    <scope>INTERACTION WITH SFI1</scope>
</reference>